<protein>
    <recommendedName>
        <fullName>Uncharacterized mitochondrial protein ORF12</fullName>
    </recommendedName>
</protein>
<accession>P15613</accession>
<sequence length="265" mass="31171">MKSLFYFFERINFLTADFLLKKIRIGADNLKDVSSLDLFFVHMHHRGVAVHNIFLFLLTYVPFFKRAVLGCYLKKKLFIDHDLKNKNYFKMKRANALFFKGDFLTSNNFLRASTTFYNSFFFFLIRNHVITKTTLNAIYFSKGSFKPAETSYYFNAYVLHFFKKNKVNDFIVFLNENKIKDYWAYLTTIYASPEAQNLKLIDPVGSLIEQSNSYADRLPTRRTLRKPAPTQSSMSRLCILLFSLTTPPLKKLRPPLSLRLHSCYP</sequence>
<organism>
    <name type="scientific">Paramecium tetraurelia</name>
    <dbReference type="NCBI Taxonomy" id="5888"/>
    <lineage>
        <taxon>Eukaryota</taxon>
        <taxon>Sar</taxon>
        <taxon>Alveolata</taxon>
        <taxon>Ciliophora</taxon>
        <taxon>Intramacronucleata</taxon>
        <taxon>Oligohymenophorea</taxon>
        <taxon>Peniculida</taxon>
        <taxon>Parameciidae</taxon>
        <taxon>Paramecium</taxon>
    </lineage>
</organism>
<comment type="subcellular location">
    <subcellularLocation>
        <location evidence="1">Mitochondrion</location>
    </subcellularLocation>
</comment>
<reference key="1">
    <citation type="journal article" date="1990" name="Nucleic Acids Res.">
        <title>Nucleotide sequence of the mitochondrial genome of Paramecium.</title>
        <authorList>
            <person name="Pritchard A.E."/>
            <person name="Seilhamer J.J."/>
            <person name="Mahalingam R."/>
            <person name="Sable C.L."/>
            <person name="Venuti S.E."/>
            <person name="Cummings D.J."/>
        </authorList>
    </citation>
    <scope>NUCLEOTIDE SEQUENCE [GENOMIC DNA]</scope>
    <source>
        <strain>Stock 51</strain>
    </source>
</reference>
<feature type="chain" id="PRO_0000196873" description="Uncharacterized mitochondrial protein ORF12">
    <location>
        <begin position="1"/>
        <end position="265"/>
    </location>
</feature>
<evidence type="ECO:0000305" key="1"/>
<proteinExistence type="predicted"/>
<geneLocation type="mitochondrion"/>
<dbReference type="EMBL" id="X15917">
    <property type="protein sequence ID" value="CAA34056.1"/>
    <property type="molecule type" value="Genomic_DNA"/>
</dbReference>
<dbReference type="PIR" id="S07747">
    <property type="entry name" value="S07747"/>
</dbReference>
<dbReference type="GO" id="GO:0005739">
    <property type="term" value="C:mitochondrion"/>
    <property type="evidence" value="ECO:0007669"/>
    <property type="project" value="UniProtKB-SubCell"/>
</dbReference>
<name>YM12_PARTE</name>
<keyword id="KW-0496">Mitochondrion</keyword>